<accession>P35108</accession>
<comment type="function">
    <text>Antenna complexes are light-harvesting systems, which transfer the excitation energy to the reaction centers.</text>
</comment>
<comment type="subunit">
    <text>The core complex is formed by different alpha and beta chains, binding bacteriochlorophyll molecules, and arranged most probably in tetrameric structures disposed around the reaction center. The non-pigmented gamma chains may constitute additional components.</text>
</comment>
<comment type="subcellular location">
    <subcellularLocation>
        <location>Cell inner membrane</location>
        <topology>Single-pass type II membrane protein</topology>
    </subcellularLocation>
</comment>
<comment type="similarity">
    <text evidence="2">Belongs to the antenna complex beta subunit family.</text>
</comment>
<dbReference type="EMBL" id="X64958">
    <property type="protein sequence ID" value="CAA46121.1"/>
    <property type="molecule type" value="Genomic_DNA"/>
</dbReference>
<dbReference type="EMBL" id="BX572602">
    <property type="protein sequence ID" value="CAE28450.1"/>
    <property type="molecule type" value="Genomic_DNA"/>
</dbReference>
<dbReference type="SMR" id="P35108"/>
<dbReference type="STRING" id="258594.RPA3009"/>
<dbReference type="eggNOG" id="ENOG50331U4">
    <property type="taxonomic scope" value="Bacteria"/>
</dbReference>
<dbReference type="HOGENOM" id="CLU_199082_1_0_5"/>
<dbReference type="PhylomeDB" id="P35108"/>
<dbReference type="GO" id="GO:0005886">
    <property type="term" value="C:plasma membrane"/>
    <property type="evidence" value="ECO:0007669"/>
    <property type="project" value="UniProtKB-SubCell"/>
</dbReference>
<dbReference type="GO" id="GO:0030077">
    <property type="term" value="C:plasma membrane light-harvesting complex"/>
    <property type="evidence" value="ECO:0007669"/>
    <property type="project" value="InterPro"/>
</dbReference>
<dbReference type="GO" id="GO:0042314">
    <property type="term" value="F:bacteriochlorophyll binding"/>
    <property type="evidence" value="ECO:0007669"/>
    <property type="project" value="UniProtKB-KW"/>
</dbReference>
<dbReference type="GO" id="GO:0045156">
    <property type="term" value="F:electron transporter, transferring electrons within the cyclic electron transport pathway of photosynthesis activity"/>
    <property type="evidence" value="ECO:0007669"/>
    <property type="project" value="InterPro"/>
</dbReference>
<dbReference type="GO" id="GO:0046872">
    <property type="term" value="F:metal ion binding"/>
    <property type="evidence" value="ECO:0007669"/>
    <property type="project" value="UniProtKB-KW"/>
</dbReference>
<dbReference type="GO" id="GO:0019684">
    <property type="term" value="P:photosynthesis, light reaction"/>
    <property type="evidence" value="ECO:0007669"/>
    <property type="project" value="InterPro"/>
</dbReference>
<dbReference type="Gene3D" id="1.20.5.250">
    <property type="match status" value="1"/>
</dbReference>
<dbReference type="InterPro" id="IPR000066">
    <property type="entry name" value="Antenna_a/b"/>
</dbReference>
<dbReference type="InterPro" id="IPR023623">
    <property type="entry name" value="Antenna_beta_CS"/>
</dbReference>
<dbReference type="InterPro" id="IPR023624">
    <property type="entry name" value="Antenna_beta_dom_sf"/>
</dbReference>
<dbReference type="InterPro" id="IPR002362">
    <property type="entry name" value="LHB-1/5"/>
</dbReference>
<dbReference type="InterPro" id="IPR035889">
    <property type="entry name" value="Light-harvesting_complex"/>
</dbReference>
<dbReference type="NCBIfam" id="NF040862">
    <property type="entry name" value="pufB_517_ASD"/>
    <property type="match status" value="1"/>
</dbReference>
<dbReference type="Pfam" id="PF00556">
    <property type="entry name" value="LHC"/>
    <property type="match status" value="1"/>
</dbReference>
<dbReference type="PIRSF" id="PIRSF002900">
    <property type="entry name" value="Antenna_beta"/>
    <property type="match status" value="1"/>
</dbReference>
<dbReference type="PRINTS" id="PR00674">
    <property type="entry name" value="LIGHTHARVSTB"/>
</dbReference>
<dbReference type="SUPFAM" id="SSF56918">
    <property type="entry name" value="Light-harvesting complex subunits"/>
    <property type="match status" value="1"/>
</dbReference>
<dbReference type="PROSITE" id="PS00969">
    <property type="entry name" value="ANTENNA_COMP_BETA"/>
    <property type="match status" value="1"/>
</dbReference>
<proteinExistence type="inferred from homology"/>
<name>LHB3_RHOPA</name>
<sequence>MVDDSKKVWPTGLTIAESEEIHKHVIDGARIFVAIAIVAHFLAYVYSPWLH</sequence>
<keyword id="KW-0042">Antenna complex</keyword>
<keyword id="KW-0076">Bacteriochlorophyll</keyword>
<keyword id="KW-0997">Cell inner membrane</keyword>
<keyword id="KW-1003">Cell membrane</keyword>
<keyword id="KW-0148">Chlorophyll</keyword>
<keyword id="KW-0157">Chromophore</keyword>
<keyword id="KW-0437">Light-harvesting polypeptide</keyword>
<keyword id="KW-0460">Magnesium</keyword>
<keyword id="KW-0472">Membrane</keyword>
<keyword id="KW-0479">Metal-binding</keyword>
<keyword id="KW-0812">Transmembrane</keyword>
<keyword id="KW-1133">Transmembrane helix</keyword>
<reference key="1">
    <citation type="journal article" date="1989" name="EMBO J.">
        <title>Multiple copies of the coding regions for the light-harvesting B800-850 alpha- and beta-polypeptides are present in the Rhodopseudomonas palustris genome.</title>
        <authorList>
            <person name="Tadros M.H."/>
            <person name="Waterkamp K."/>
        </authorList>
    </citation>
    <scope>NUCLEOTIDE SEQUENCE [GENOMIC DNA]</scope>
    <source>
        <strain>1E5</strain>
    </source>
</reference>
<reference key="2">
    <citation type="journal article" date="2004" name="Nat. Biotechnol.">
        <title>Complete genome sequence of the metabolically versatile photosynthetic bacterium Rhodopseudomonas palustris.</title>
        <authorList>
            <person name="Larimer F.W."/>
            <person name="Chain P."/>
            <person name="Hauser L."/>
            <person name="Lamerdin J.E."/>
            <person name="Malfatti S."/>
            <person name="Do L."/>
            <person name="Land M.L."/>
            <person name="Pelletier D.A."/>
            <person name="Beatty J.T."/>
            <person name="Lang A.S."/>
            <person name="Tabita F.R."/>
            <person name="Gibson J.L."/>
            <person name="Hanson T.E."/>
            <person name="Bobst C."/>
            <person name="Torres y Torres J.L."/>
            <person name="Peres C."/>
            <person name="Harrison F.H."/>
            <person name="Gibson J."/>
            <person name="Harwood C.S."/>
        </authorList>
    </citation>
    <scope>NUCLEOTIDE SEQUENCE [LARGE SCALE GENOMIC DNA]</scope>
    <source>
        <strain>ATCC BAA-98 / CGA009</strain>
    </source>
</reference>
<gene>
    <name type="primary">pucBC</name>
    <name type="ordered locus">RPA3009</name>
</gene>
<evidence type="ECO:0000255" key="1"/>
<evidence type="ECO:0000305" key="2"/>
<organism>
    <name type="scientific">Rhodopseudomonas palustris (strain ATCC BAA-98 / CGA009)</name>
    <dbReference type="NCBI Taxonomy" id="258594"/>
    <lineage>
        <taxon>Bacteria</taxon>
        <taxon>Pseudomonadati</taxon>
        <taxon>Pseudomonadota</taxon>
        <taxon>Alphaproteobacteria</taxon>
        <taxon>Hyphomicrobiales</taxon>
        <taxon>Nitrobacteraceae</taxon>
        <taxon>Rhodopseudomonas</taxon>
    </lineage>
</organism>
<protein>
    <recommendedName>
        <fullName>Light-harvesting protein B-800-850 beta chain C</fullName>
    </recommendedName>
    <alternativeName>
        <fullName>Antenna pigment protein beta chain C</fullName>
    </alternativeName>
    <alternativeName>
        <fullName>LH II-C beta</fullName>
    </alternativeName>
</protein>
<feature type="chain" id="PRO_0000099831" description="Light-harvesting protein B-800-850 beta chain C">
    <location>
        <begin position="1"/>
        <end position="51"/>
    </location>
</feature>
<feature type="topological domain" description="Cytoplasmic" evidence="1">
    <location>
        <begin position="1"/>
        <end position="23"/>
    </location>
</feature>
<feature type="transmembrane region" description="Helical" evidence="1">
    <location>
        <begin position="24"/>
        <end position="46"/>
    </location>
</feature>
<feature type="topological domain" description="Periplasmic" evidence="1">
    <location>
        <begin position="47"/>
        <end position="51"/>
    </location>
</feature>
<feature type="binding site" description="axial binding residue" evidence="1">
    <location>
        <position position="22"/>
    </location>
    <ligand>
        <name>a bacteriochlorophyll</name>
        <dbReference type="ChEBI" id="CHEBI:38201"/>
    </ligand>
    <ligandPart>
        <name>Mg</name>
        <dbReference type="ChEBI" id="CHEBI:25107"/>
    </ligandPart>
</feature>
<feature type="binding site" description="axial binding residue" evidence="1">
    <location>
        <position position="40"/>
    </location>
    <ligand>
        <name>a bacteriochlorophyll</name>
        <dbReference type="ChEBI" id="CHEBI:38201"/>
    </ligand>
    <ligandPart>
        <name>Mg</name>
        <dbReference type="ChEBI" id="CHEBI:25107"/>
    </ligandPart>
</feature>